<dbReference type="EMBL" id="AE000783">
    <property type="protein sequence ID" value="AAC66898.1"/>
    <property type="molecule type" value="Genomic_DNA"/>
</dbReference>
<dbReference type="PIR" id="B70167">
    <property type="entry name" value="B70167"/>
</dbReference>
<dbReference type="RefSeq" id="NP_212673.1">
    <property type="nucleotide sequence ID" value="NC_001318.1"/>
</dbReference>
<dbReference type="RefSeq" id="WP_002656001.1">
    <property type="nucleotide sequence ID" value="NC_001318.1"/>
</dbReference>
<dbReference type="SMR" id="O51489"/>
<dbReference type="STRING" id="224326.BB_0539"/>
<dbReference type="PaxDb" id="224326-BB_0539"/>
<dbReference type="EnsemblBacteria" id="AAC66898">
    <property type="protein sequence ID" value="AAC66898"/>
    <property type="gene ID" value="BB_0539"/>
</dbReference>
<dbReference type="KEGG" id="bbu:BB_0539"/>
<dbReference type="PATRIC" id="fig|224326.49.peg.930"/>
<dbReference type="HOGENOM" id="CLU_058671_1_0_12"/>
<dbReference type="OrthoDB" id="9793828at2"/>
<dbReference type="Proteomes" id="UP000001807">
    <property type="component" value="Chromosome"/>
</dbReference>
<dbReference type="GO" id="GO:0005886">
    <property type="term" value="C:plasma membrane"/>
    <property type="evidence" value="ECO:0007669"/>
    <property type="project" value="UniProtKB-SubCell"/>
</dbReference>
<dbReference type="CDD" id="cd10432">
    <property type="entry name" value="BI-1-like_bacterial"/>
    <property type="match status" value="1"/>
</dbReference>
<dbReference type="InterPro" id="IPR006214">
    <property type="entry name" value="Bax_inhibitor_1-related"/>
</dbReference>
<dbReference type="PANTHER" id="PTHR23291">
    <property type="entry name" value="BAX INHIBITOR-RELATED"/>
    <property type="match status" value="1"/>
</dbReference>
<dbReference type="PANTHER" id="PTHR23291:SF50">
    <property type="entry name" value="PROTEIN LIFEGUARD 4"/>
    <property type="match status" value="1"/>
</dbReference>
<dbReference type="Pfam" id="PF01027">
    <property type="entry name" value="Bax1-I"/>
    <property type="match status" value="1"/>
</dbReference>
<comment type="subcellular location">
    <subcellularLocation>
        <location evidence="2">Cell membrane</location>
        <topology evidence="2">Multi-pass membrane protein</topology>
    </subcellularLocation>
</comment>
<comment type="similarity">
    <text evidence="2">Belongs to the BI1 family.</text>
</comment>
<organism>
    <name type="scientific">Borreliella burgdorferi (strain ATCC 35210 / DSM 4680 / CIP 102532 / B31)</name>
    <name type="common">Borrelia burgdorferi</name>
    <dbReference type="NCBI Taxonomy" id="224326"/>
    <lineage>
        <taxon>Bacteria</taxon>
        <taxon>Pseudomonadati</taxon>
        <taxon>Spirochaetota</taxon>
        <taxon>Spirochaetia</taxon>
        <taxon>Spirochaetales</taxon>
        <taxon>Borreliaceae</taxon>
        <taxon>Borreliella</taxon>
    </lineage>
</organism>
<reference key="1">
    <citation type="journal article" date="1997" name="Nature">
        <title>Genomic sequence of a Lyme disease spirochaete, Borrelia burgdorferi.</title>
        <authorList>
            <person name="Fraser C.M."/>
            <person name="Casjens S."/>
            <person name="Huang W.M."/>
            <person name="Sutton G.G."/>
            <person name="Clayton R.A."/>
            <person name="Lathigra R."/>
            <person name="White O."/>
            <person name="Ketchum K.A."/>
            <person name="Dodson R.J."/>
            <person name="Hickey E.K."/>
            <person name="Gwinn M.L."/>
            <person name="Dougherty B.A."/>
            <person name="Tomb J.-F."/>
            <person name="Fleischmann R.D."/>
            <person name="Richardson D.L."/>
            <person name="Peterson J.D."/>
            <person name="Kerlavage A.R."/>
            <person name="Quackenbush J."/>
            <person name="Salzberg S.L."/>
            <person name="Hanson M."/>
            <person name="van Vugt R."/>
            <person name="Palmer N."/>
            <person name="Adams M.D."/>
            <person name="Gocayne J.D."/>
            <person name="Weidman J.F."/>
            <person name="Utterback T.R."/>
            <person name="Watthey L."/>
            <person name="McDonald L.A."/>
            <person name="Artiach P."/>
            <person name="Bowman C."/>
            <person name="Garland S.A."/>
            <person name="Fujii C."/>
            <person name="Cotton M.D."/>
            <person name="Horst K."/>
            <person name="Roberts K.M."/>
            <person name="Hatch B."/>
            <person name="Smith H.O."/>
            <person name="Venter J.C."/>
        </authorList>
    </citation>
    <scope>NUCLEOTIDE SEQUENCE [LARGE SCALE GENOMIC DNA]</scope>
    <source>
        <strain>ATCC 35210 / DSM 4680 / CIP 102532 / B31</strain>
    </source>
</reference>
<evidence type="ECO:0000255" key="1"/>
<evidence type="ECO:0000305" key="2"/>
<keyword id="KW-1003">Cell membrane</keyword>
<keyword id="KW-0472">Membrane</keyword>
<keyword id="KW-1185">Reference proteome</keyword>
<keyword id="KW-0812">Transmembrane</keyword>
<keyword id="KW-1133">Transmembrane helix</keyword>
<name>Y539_BORBU</name>
<protein>
    <recommendedName>
        <fullName>Uncharacterized protein BB_0539</fullName>
    </recommendedName>
</protein>
<gene>
    <name type="ordered locus">BB_0539</name>
</gene>
<proteinExistence type="inferred from homology"/>
<accession>O51489</accession>
<sequence>MIDLTQEKQEILIKNKFLAKVFGLMSIGLLISAVFAYATSENQTIKAIIFSNSMSFMAMILIQFGLVYAISGALNKISSNTATALFLLYSALTGVTLSSIFMIYTQGSIVFTFGITAGTFLGMSVYGYTTTTDLTKMGSYLIMGLWGIIIASLVNMFFRSSGLNFLISILGVVIFTGLTAYDVQNISKMDKMLQDDTEIKNRMAVVASLKLYLDFINLFLYLLRFLGQRRND</sequence>
<feature type="chain" id="PRO_0000179094" description="Uncharacterized protein BB_0539">
    <location>
        <begin position="1"/>
        <end position="232"/>
    </location>
</feature>
<feature type="transmembrane region" description="Helical" evidence="1">
    <location>
        <begin position="17"/>
        <end position="37"/>
    </location>
</feature>
<feature type="transmembrane region" description="Helical" evidence="1">
    <location>
        <begin position="54"/>
        <end position="74"/>
    </location>
</feature>
<feature type="transmembrane region" description="Helical" evidence="1">
    <location>
        <begin position="84"/>
        <end position="104"/>
    </location>
</feature>
<feature type="transmembrane region" description="Helical" evidence="1">
    <location>
        <begin position="107"/>
        <end position="127"/>
    </location>
</feature>
<feature type="transmembrane region" description="Helical" evidence="1">
    <location>
        <begin position="138"/>
        <end position="158"/>
    </location>
</feature>
<feature type="transmembrane region" description="Helical" evidence="1">
    <location>
        <begin position="161"/>
        <end position="181"/>
    </location>
</feature>
<feature type="transmembrane region" description="Helical" evidence="1">
    <location>
        <begin position="203"/>
        <end position="223"/>
    </location>
</feature>